<gene>
    <name type="primary">PIP</name>
</gene>
<accession>A0A888</accession>
<protein>
    <recommendedName>
        <fullName>Prolactin-inducible protein homolog</fullName>
    </recommendedName>
    <alternativeName>
        <fullName>Prolactin-induced protein</fullName>
    </alternativeName>
</protein>
<proteinExistence type="inferred from homology"/>
<sequence>MHLLQLLFRASPATLLLVLCLQLGANKAQDNTRKIIIKDFDIPKSVRPNDEVTAVLAVQTELKECMVIKTYLISSVPLEGAFNYKYTACLCDENPKTFYWDFYTNRTVQIAAVVDVIRELGICPDDAAVIPIKNNRFYTTETLEVE</sequence>
<feature type="signal peptide" evidence="1">
    <location>
        <begin position="1"/>
        <end position="28"/>
    </location>
</feature>
<feature type="chain" id="PRO_0000273197" description="Prolactin-inducible protein homolog">
    <location>
        <begin position="29"/>
        <end position="146"/>
    </location>
</feature>
<feature type="modified residue" description="Pyrrolidone carboxylic acid" evidence="2">
    <location>
        <position position="29"/>
    </location>
</feature>
<feature type="glycosylation site" description="N-linked (GlcNAc...) asparagine" evidence="3">
    <location>
        <position position="105"/>
    </location>
</feature>
<feature type="disulfide bond" evidence="1">
    <location>
        <begin position="65"/>
        <end position="91"/>
    </location>
</feature>
<feature type="disulfide bond" evidence="1">
    <location>
        <begin position="89"/>
        <end position="123"/>
    </location>
</feature>
<dbReference type="EMBL" id="AB251904">
    <property type="protein sequence ID" value="BAF35624.1"/>
    <property type="molecule type" value="Genomic_DNA"/>
</dbReference>
<dbReference type="RefSeq" id="XP_054349661.1">
    <property type="nucleotide sequence ID" value="XM_054493686.1"/>
</dbReference>
<dbReference type="SMR" id="A0A888"/>
<dbReference type="GlyCosmos" id="A0A888">
    <property type="glycosylation" value="1 site, No reported glycans"/>
</dbReference>
<dbReference type="GeneID" id="129039982"/>
<dbReference type="GO" id="GO:0005615">
    <property type="term" value="C:extracellular space"/>
    <property type="evidence" value="ECO:0007669"/>
    <property type="project" value="TreeGrafter"/>
</dbReference>
<dbReference type="GO" id="GO:0004190">
    <property type="term" value="F:aspartic-type endopeptidase activity"/>
    <property type="evidence" value="ECO:0007669"/>
    <property type="project" value="TreeGrafter"/>
</dbReference>
<dbReference type="GO" id="GO:0006508">
    <property type="term" value="P:proteolysis"/>
    <property type="evidence" value="ECO:0007669"/>
    <property type="project" value="TreeGrafter"/>
</dbReference>
<dbReference type="GO" id="GO:0002682">
    <property type="term" value="P:regulation of immune system process"/>
    <property type="evidence" value="ECO:0007669"/>
    <property type="project" value="TreeGrafter"/>
</dbReference>
<dbReference type="FunFam" id="2.60.40.10:FF:001572">
    <property type="entry name" value="Prolactin-inducible protein homolog"/>
    <property type="match status" value="1"/>
</dbReference>
<dbReference type="Gene3D" id="2.60.40.10">
    <property type="entry name" value="Immunoglobulins"/>
    <property type="match status" value="1"/>
</dbReference>
<dbReference type="InterPro" id="IPR013783">
    <property type="entry name" value="Ig-like_fold"/>
</dbReference>
<dbReference type="InterPro" id="IPR014756">
    <property type="entry name" value="Ig_E-set"/>
</dbReference>
<dbReference type="InterPro" id="IPR007990">
    <property type="entry name" value="PIP"/>
</dbReference>
<dbReference type="PANTHER" id="PTHR15096:SF5">
    <property type="entry name" value="PROLACTIN-INDUCIBLE PROTEIN"/>
    <property type="match status" value="1"/>
</dbReference>
<dbReference type="PANTHER" id="PTHR15096">
    <property type="entry name" value="PROLACTIN-INDUCIBLE PROTEIN/SEMINAL VESICLE ANTIGEN"/>
    <property type="match status" value="1"/>
</dbReference>
<dbReference type="Pfam" id="PF05326">
    <property type="entry name" value="SVA"/>
    <property type="match status" value="1"/>
</dbReference>
<dbReference type="PIRSF" id="PIRSF002572">
    <property type="entry name" value="PIP-GCDFP-15"/>
    <property type="match status" value="1"/>
</dbReference>
<dbReference type="SUPFAM" id="SSF81296">
    <property type="entry name" value="E set domains"/>
    <property type="match status" value="1"/>
</dbReference>
<comment type="subunit">
    <text evidence="1">Monomer. Interacts with AZGP1 (By similarity).</text>
</comment>
<comment type="subcellular location">
    <subcellularLocation>
        <location evidence="1">Secreted</location>
    </subcellularLocation>
</comment>
<comment type="similarity">
    <text evidence="4">Belongs to the PIP family.</text>
</comment>
<name>PIP_PONPY</name>
<evidence type="ECO:0000250" key="1"/>
<evidence type="ECO:0000250" key="2">
    <source>
        <dbReference type="UniProtKB" id="P12273"/>
    </source>
</evidence>
<evidence type="ECO:0000255" key="3"/>
<evidence type="ECO:0000305" key="4"/>
<organism>
    <name type="scientific">Pongo pygmaeus</name>
    <name type="common">Bornean orangutan</name>
    <dbReference type="NCBI Taxonomy" id="9600"/>
    <lineage>
        <taxon>Eukaryota</taxon>
        <taxon>Metazoa</taxon>
        <taxon>Chordata</taxon>
        <taxon>Craniata</taxon>
        <taxon>Vertebrata</taxon>
        <taxon>Euteleostomi</taxon>
        <taxon>Mammalia</taxon>
        <taxon>Eutheria</taxon>
        <taxon>Euarchontoglires</taxon>
        <taxon>Primates</taxon>
        <taxon>Haplorrhini</taxon>
        <taxon>Catarrhini</taxon>
        <taxon>Hominidae</taxon>
        <taxon>Pongo</taxon>
    </lineage>
</organism>
<reference key="1">
    <citation type="journal article" date="2006" name="Gene">
        <title>Origin and evolution of gene for prolactin-induced protein.</title>
        <authorList>
            <person name="Kitano T."/>
            <person name="Tian W."/>
            <person name="Umetsu K."/>
            <person name="Yuasa I."/>
            <person name="Yamazaki K."/>
            <person name="Saitou N."/>
            <person name="Osawa M."/>
        </authorList>
    </citation>
    <scope>NUCLEOTIDE SEQUENCE [GENOMIC DNA]</scope>
    <source>
        <strain>Isolate T039</strain>
    </source>
</reference>
<keyword id="KW-1015">Disulfide bond</keyword>
<keyword id="KW-0325">Glycoprotein</keyword>
<keyword id="KW-0873">Pyrrolidone carboxylic acid</keyword>
<keyword id="KW-0964">Secreted</keyword>
<keyword id="KW-0732">Signal</keyword>